<proteinExistence type="evidence at protein level"/>
<comment type="function">
    <text evidence="3 7">Binds to F-actin in a calcium-independent manner. Has no direct effect on actin depolymerization. Acts as a chaperone for ALOX5 (5LO), influencing both its stability and activity in leukotrienes synthesis.</text>
</comment>
<comment type="subunit">
    <text evidence="2 5 6 7">Interacts with 5-lipoxygenase (ALOX5/5LO) in a calcium-independent manner. Binds to F-actin with a stoichiometry of 1:2.</text>
</comment>
<comment type="interaction">
    <interactant intactId="EBI-79926">
        <id>Q14019</id>
    </interactant>
    <interactant intactId="EBI-79934">
        <id>P09917</id>
        <label>ALOX5</label>
    </interactant>
    <organismsDiffer>false</organismsDiffer>
    <experiments>5</experiments>
</comment>
<comment type="interaction">
    <interactant intactId="EBI-79926">
        <id>Q14019</id>
    </interactant>
    <interactant intactId="EBI-10231995">
        <id>Q13956</id>
        <label>PDE6H</label>
    </interactant>
    <organismsDiffer>false</organismsDiffer>
    <experiments>3</experiments>
</comment>
<comment type="interaction">
    <interactant intactId="EBI-79926">
        <id>Q14019</id>
    </interactant>
    <interactant intactId="EBI-750109">
        <id>Q9NYB0</id>
        <label>TERF2IP</label>
    </interactant>
    <organismsDiffer>false</organismsDiffer>
    <experiments>2</experiments>
</comment>
<comment type="subcellular location">
    <subcellularLocation>
        <location evidence="3">Cytoplasm</location>
    </subcellularLocation>
    <subcellularLocation>
        <location evidence="3">Cytoplasm</location>
        <location evidence="3">Cytoskeleton</location>
    </subcellularLocation>
    <subcellularLocation>
        <location evidence="7">Nucleus</location>
    </subcellularLocation>
</comment>
<comment type="tissue specificity">
    <text evidence="3">Widely expressed with highest levels in placenta, lung, kidney and peripheral blood leukocytes and lower levels in brain, liver and pancreas.</text>
</comment>
<comment type="similarity">
    <text evidence="8">Belongs to the actin-binding proteins ADF family. Coactosin subfamily.</text>
</comment>
<accession>Q14019</accession>
<accession>B2RDU3</accession>
<accession>D3DUL9</accession>
<accession>Q86XM5</accession>
<keyword id="KW-0002">3D-structure</keyword>
<keyword id="KW-0007">Acetylation</keyword>
<keyword id="KW-0009">Actin-binding</keyword>
<keyword id="KW-0143">Chaperone</keyword>
<keyword id="KW-0963">Cytoplasm</keyword>
<keyword id="KW-0206">Cytoskeleton</keyword>
<keyword id="KW-0903">Direct protein sequencing</keyword>
<keyword id="KW-0539">Nucleus</keyword>
<keyword id="KW-1267">Proteomics identification</keyword>
<keyword id="KW-1185">Reference proteome</keyword>
<evidence type="ECO:0000255" key="1">
    <source>
        <dbReference type="PROSITE-ProRule" id="PRU00599"/>
    </source>
</evidence>
<evidence type="ECO:0000269" key="2">
    <source>
    </source>
</evidence>
<evidence type="ECO:0000269" key="3">
    <source>
    </source>
</evidence>
<evidence type="ECO:0000269" key="4">
    <source>
    </source>
</evidence>
<evidence type="ECO:0000269" key="5">
    <source>
    </source>
</evidence>
<evidence type="ECO:0000269" key="6">
    <source>
    </source>
</evidence>
<evidence type="ECO:0000269" key="7">
    <source>
    </source>
</evidence>
<evidence type="ECO:0000305" key="8"/>
<evidence type="ECO:0007744" key="9">
    <source>
    </source>
</evidence>
<evidence type="ECO:0007744" key="10">
    <source>
    </source>
</evidence>
<evidence type="ECO:0007829" key="11">
    <source>
        <dbReference type="PDB" id="1T3Y"/>
    </source>
</evidence>
<evidence type="ECO:0007829" key="12">
    <source>
        <dbReference type="PDB" id="1TMW"/>
    </source>
</evidence>
<evidence type="ECO:0007829" key="13">
    <source>
        <dbReference type="PDB" id="1WNJ"/>
    </source>
</evidence>
<sequence length="142" mass="15945">MATKIDKEACRAAYNLVRDDGSAVIWVTFKYDGSTIVPGEQGAEYQHFIQQCTDDVRLFAFVRFTTGDAMSKRSKFALITWIGENVSGLQRAKTGTDKTLVKEVVQNFAKEFVISDRKELEEDFIKSELKKAGGANYDAQTE</sequence>
<protein>
    <recommendedName>
        <fullName>Coactosin-like protein</fullName>
    </recommendedName>
</protein>
<feature type="initiator methionine" description="Removed" evidence="4 10">
    <location>
        <position position="1"/>
    </location>
</feature>
<feature type="chain" id="PRO_0000214954" description="Coactosin-like protein">
    <location>
        <begin position="2"/>
        <end position="142"/>
    </location>
</feature>
<feature type="domain" description="ADF-H" evidence="1">
    <location>
        <begin position="2"/>
        <end position="130"/>
    </location>
</feature>
<feature type="region of interest" description="Flexible and important for F-actin binding">
    <location>
        <begin position="66"/>
        <end position="75"/>
    </location>
</feature>
<feature type="modified residue" description="N-acetylalanine" evidence="10">
    <location>
        <position position="2"/>
    </location>
</feature>
<feature type="modified residue" description="N6-acetyllysine" evidence="9">
    <location>
        <position position="102"/>
    </location>
</feature>
<feature type="modified residue" description="N6-acetyllysine" evidence="9">
    <location>
        <position position="126"/>
    </location>
</feature>
<feature type="mutagenesis site" description="Abolishes actin-binding activity." evidence="3">
    <original>K</original>
    <variation>A</variation>
    <location>
        <position position="75"/>
    </location>
</feature>
<feature type="mutagenesis site" description="No effect on 5LO-binding activity." evidence="2">
    <original>K</original>
    <variation>A</variation>
    <location>
        <position position="130"/>
    </location>
</feature>
<feature type="mutagenesis site" description="Abolishes 5LO-binding activity." evidence="2">
    <original>K</original>
    <variation>A</variation>
    <location>
        <position position="131"/>
    </location>
</feature>
<feature type="mutagenesis site" description="Abolishes 5LO-binding activity." evidence="2">
    <original>K</original>
    <variation>E</variation>
    <location>
        <position position="131"/>
    </location>
</feature>
<feature type="mutagenesis site" description="No effect on 5LO-binding activity." evidence="2">
    <original>K</original>
    <variation>R</variation>
    <location>
        <position position="131"/>
    </location>
</feature>
<feature type="sequence conflict" description="In Ref. 5; AAH42970." evidence="8" ref="5">
    <original>P</original>
    <variation>H</variation>
    <location>
        <position position="38"/>
    </location>
</feature>
<feature type="helix" evidence="11">
    <location>
        <begin position="7"/>
        <end position="18"/>
    </location>
</feature>
<feature type="strand" evidence="12">
    <location>
        <begin position="20"/>
        <end position="23"/>
    </location>
</feature>
<feature type="strand" evidence="11">
    <location>
        <begin position="26"/>
        <end position="32"/>
    </location>
</feature>
<feature type="strand" evidence="11">
    <location>
        <begin position="35"/>
        <end position="44"/>
    </location>
</feature>
<feature type="helix" evidence="11">
    <location>
        <begin position="45"/>
        <end position="51"/>
    </location>
</feature>
<feature type="strand" evidence="13">
    <location>
        <begin position="54"/>
        <end position="56"/>
    </location>
</feature>
<feature type="strand" evidence="11">
    <location>
        <begin position="57"/>
        <end position="66"/>
    </location>
</feature>
<feature type="helix" evidence="11">
    <location>
        <begin position="69"/>
        <end position="71"/>
    </location>
</feature>
<feature type="strand" evidence="11">
    <location>
        <begin position="73"/>
        <end position="82"/>
    </location>
</feature>
<feature type="strand" evidence="13">
    <location>
        <begin position="84"/>
        <end position="86"/>
    </location>
</feature>
<feature type="helix" evidence="11">
    <location>
        <begin position="88"/>
        <end position="101"/>
    </location>
</feature>
<feature type="turn" evidence="11">
    <location>
        <begin position="102"/>
        <end position="104"/>
    </location>
</feature>
<feature type="strand" evidence="11">
    <location>
        <begin position="109"/>
        <end position="114"/>
    </location>
</feature>
<feature type="helix" evidence="11">
    <location>
        <begin position="117"/>
        <end position="120"/>
    </location>
</feature>
<feature type="helix" evidence="11">
    <location>
        <begin position="122"/>
        <end position="131"/>
    </location>
</feature>
<organism>
    <name type="scientific">Homo sapiens</name>
    <name type="common">Human</name>
    <dbReference type="NCBI Taxonomy" id="9606"/>
    <lineage>
        <taxon>Eukaryota</taxon>
        <taxon>Metazoa</taxon>
        <taxon>Chordata</taxon>
        <taxon>Craniata</taxon>
        <taxon>Vertebrata</taxon>
        <taxon>Euteleostomi</taxon>
        <taxon>Mammalia</taxon>
        <taxon>Eutheria</taxon>
        <taxon>Euarchontoglires</taxon>
        <taxon>Primates</taxon>
        <taxon>Haplorrhini</taxon>
        <taxon>Catarrhini</taxon>
        <taxon>Hominidae</taxon>
        <taxon>Homo</taxon>
    </lineage>
</organism>
<reference key="1">
    <citation type="journal article" date="1997" name="Nat. Genet.">
        <title>Homologous recombination of a flanking repeat gene cluster is a mechanism for a common contiguous gene deletion syndrome.</title>
        <authorList>
            <person name="Chen K.-S."/>
            <person name="Manian P."/>
            <person name="Koeuth T."/>
            <person name="Potocki L."/>
            <person name="Zhao Q."/>
            <person name="Chinault A.C."/>
            <person name="Lee C.-C."/>
            <person name="Lupski J.R."/>
        </authorList>
    </citation>
    <scope>NUCLEOTIDE SEQUENCE [MRNA]</scope>
    <source>
        <tissue>Placenta</tissue>
    </source>
</reference>
<reference key="2">
    <citation type="submission" date="2003-05" db="EMBL/GenBank/DDBJ databases">
        <title>Cloning of human full-length CDSs in BD Creator(TM) system donor vector.</title>
        <authorList>
            <person name="Kalnine N."/>
            <person name="Chen X."/>
            <person name="Rolfs A."/>
            <person name="Halleck A."/>
            <person name="Hines L."/>
            <person name="Eisenstein S."/>
            <person name="Koundinya M."/>
            <person name="Raphael J."/>
            <person name="Moreira D."/>
            <person name="Kelley T."/>
            <person name="LaBaer J."/>
            <person name="Lin Y."/>
            <person name="Phelan M."/>
            <person name="Farmer A."/>
        </authorList>
    </citation>
    <scope>NUCLEOTIDE SEQUENCE [LARGE SCALE MRNA]</scope>
</reference>
<reference key="3">
    <citation type="journal article" date="2004" name="Nat. Genet.">
        <title>Complete sequencing and characterization of 21,243 full-length human cDNAs.</title>
        <authorList>
            <person name="Ota T."/>
            <person name="Suzuki Y."/>
            <person name="Nishikawa T."/>
            <person name="Otsuki T."/>
            <person name="Sugiyama T."/>
            <person name="Irie R."/>
            <person name="Wakamatsu A."/>
            <person name="Hayashi K."/>
            <person name="Sato H."/>
            <person name="Nagai K."/>
            <person name="Kimura K."/>
            <person name="Makita H."/>
            <person name="Sekine M."/>
            <person name="Obayashi M."/>
            <person name="Nishi T."/>
            <person name="Shibahara T."/>
            <person name="Tanaka T."/>
            <person name="Ishii S."/>
            <person name="Yamamoto J."/>
            <person name="Saito K."/>
            <person name="Kawai Y."/>
            <person name="Isono Y."/>
            <person name="Nakamura Y."/>
            <person name="Nagahari K."/>
            <person name="Murakami K."/>
            <person name="Yasuda T."/>
            <person name="Iwayanagi T."/>
            <person name="Wagatsuma M."/>
            <person name="Shiratori A."/>
            <person name="Sudo H."/>
            <person name="Hosoiri T."/>
            <person name="Kaku Y."/>
            <person name="Kodaira H."/>
            <person name="Kondo H."/>
            <person name="Sugawara M."/>
            <person name="Takahashi M."/>
            <person name="Kanda K."/>
            <person name="Yokoi T."/>
            <person name="Furuya T."/>
            <person name="Kikkawa E."/>
            <person name="Omura Y."/>
            <person name="Abe K."/>
            <person name="Kamihara K."/>
            <person name="Katsuta N."/>
            <person name="Sato K."/>
            <person name="Tanikawa M."/>
            <person name="Yamazaki M."/>
            <person name="Ninomiya K."/>
            <person name="Ishibashi T."/>
            <person name="Yamashita H."/>
            <person name="Murakawa K."/>
            <person name="Fujimori K."/>
            <person name="Tanai H."/>
            <person name="Kimata M."/>
            <person name="Watanabe M."/>
            <person name="Hiraoka S."/>
            <person name="Chiba Y."/>
            <person name="Ishida S."/>
            <person name="Ono Y."/>
            <person name="Takiguchi S."/>
            <person name="Watanabe S."/>
            <person name="Yosida M."/>
            <person name="Hotuta T."/>
            <person name="Kusano J."/>
            <person name="Kanehori K."/>
            <person name="Takahashi-Fujii A."/>
            <person name="Hara H."/>
            <person name="Tanase T.-O."/>
            <person name="Nomura Y."/>
            <person name="Togiya S."/>
            <person name="Komai F."/>
            <person name="Hara R."/>
            <person name="Takeuchi K."/>
            <person name="Arita M."/>
            <person name="Imose N."/>
            <person name="Musashino K."/>
            <person name="Yuuki H."/>
            <person name="Oshima A."/>
            <person name="Sasaki N."/>
            <person name="Aotsuka S."/>
            <person name="Yoshikawa Y."/>
            <person name="Matsunawa H."/>
            <person name="Ichihara T."/>
            <person name="Shiohata N."/>
            <person name="Sano S."/>
            <person name="Moriya S."/>
            <person name="Momiyama H."/>
            <person name="Satoh N."/>
            <person name="Takami S."/>
            <person name="Terashima Y."/>
            <person name="Suzuki O."/>
            <person name="Nakagawa S."/>
            <person name="Senoh A."/>
            <person name="Mizoguchi H."/>
            <person name="Goto Y."/>
            <person name="Shimizu F."/>
            <person name="Wakebe H."/>
            <person name="Hishigaki H."/>
            <person name="Watanabe T."/>
            <person name="Sugiyama A."/>
            <person name="Takemoto M."/>
            <person name="Kawakami B."/>
            <person name="Yamazaki M."/>
            <person name="Watanabe K."/>
            <person name="Kumagai A."/>
            <person name="Itakura S."/>
            <person name="Fukuzumi Y."/>
            <person name="Fujimori Y."/>
            <person name="Komiyama M."/>
            <person name="Tashiro H."/>
            <person name="Tanigami A."/>
            <person name="Fujiwara T."/>
            <person name="Ono T."/>
            <person name="Yamada K."/>
            <person name="Fujii Y."/>
            <person name="Ozaki K."/>
            <person name="Hirao M."/>
            <person name="Ohmori Y."/>
            <person name="Kawabata A."/>
            <person name="Hikiji T."/>
            <person name="Kobatake N."/>
            <person name="Inagaki H."/>
            <person name="Ikema Y."/>
            <person name="Okamoto S."/>
            <person name="Okitani R."/>
            <person name="Kawakami T."/>
            <person name="Noguchi S."/>
            <person name="Itoh T."/>
            <person name="Shigeta K."/>
            <person name="Senba T."/>
            <person name="Matsumura K."/>
            <person name="Nakajima Y."/>
            <person name="Mizuno T."/>
            <person name="Morinaga M."/>
            <person name="Sasaki M."/>
            <person name="Togashi T."/>
            <person name="Oyama M."/>
            <person name="Hata H."/>
            <person name="Watanabe M."/>
            <person name="Komatsu T."/>
            <person name="Mizushima-Sugano J."/>
            <person name="Satoh T."/>
            <person name="Shirai Y."/>
            <person name="Takahashi Y."/>
            <person name="Nakagawa K."/>
            <person name="Okumura K."/>
            <person name="Nagase T."/>
            <person name="Nomura N."/>
            <person name="Kikuchi H."/>
            <person name="Masuho Y."/>
            <person name="Yamashita R."/>
            <person name="Nakai K."/>
            <person name="Yada T."/>
            <person name="Nakamura Y."/>
            <person name="Ohara O."/>
            <person name="Isogai T."/>
            <person name="Sugano S."/>
        </authorList>
    </citation>
    <scope>NUCLEOTIDE SEQUENCE [LARGE SCALE MRNA]</scope>
    <source>
        <tissue>Testis</tissue>
    </source>
</reference>
<reference key="4">
    <citation type="submission" date="2005-09" db="EMBL/GenBank/DDBJ databases">
        <authorList>
            <person name="Mural R.J."/>
            <person name="Istrail S."/>
            <person name="Sutton G.G."/>
            <person name="Florea L."/>
            <person name="Halpern A.L."/>
            <person name="Mobarry C.M."/>
            <person name="Lippert R."/>
            <person name="Walenz B."/>
            <person name="Shatkay H."/>
            <person name="Dew I."/>
            <person name="Miller J.R."/>
            <person name="Flanigan M.J."/>
            <person name="Edwards N.J."/>
            <person name="Bolanos R."/>
            <person name="Fasulo D."/>
            <person name="Halldorsson B.V."/>
            <person name="Hannenhalli S."/>
            <person name="Turner R."/>
            <person name="Yooseph S."/>
            <person name="Lu F."/>
            <person name="Nusskern D.R."/>
            <person name="Shue B.C."/>
            <person name="Zheng X.H."/>
            <person name="Zhong F."/>
            <person name="Delcher A.L."/>
            <person name="Huson D.H."/>
            <person name="Kravitz S.A."/>
            <person name="Mouchard L."/>
            <person name="Reinert K."/>
            <person name="Remington K.A."/>
            <person name="Clark A.G."/>
            <person name="Waterman M.S."/>
            <person name="Eichler E.E."/>
            <person name="Adams M.D."/>
            <person name="Hunkapiller M.W."/>
            <person name="Myers E.W."/>
            <person name="Venter J.C."/>
        </authorList>
    </citation>
    <scope>NUCLEOTIDE SEQUENCE [LARGE SCALE GENOMIC DNA]</scope>
</reference>
<reference key="5">
    <citation type="journal article" date="2004" name="Genome Res.">
        <title>The status, quality, and expansion of the NIH full-length cDNA project: the Mammalian Gene Collection (MGC).</title>
        <authorList>
            <consortium name="The MGC Project Team"/>
        </authorList>
    </citation>
    <scope>NUCLEOTIDE SEQUENCE [LARGE SCALE MRNA]</scope>
    <source>
        <tissue>Brain</tissue>
        <tissue>Cervix</tissue>
        <tissue>Kidney</tissue>
        <tissue>Lung</tissue>
        <tissue>Uterus</tissue>
    </source>
</reference>
<reference key="6">
    <citation type="journal article" date="2003" name="Nat. Biotechnol.">
        <title>Exploring proteomes and analyzing protein processing by mass spectrometric identification of sorted N-terminal peptides.</title>
        <authorList>
            <person name="Gevaert K."/>
            <person name="Goethals M."/>
            <person name="Martens L."/>
            <person name="Van Damme J."/>
            <person name="Staes A."/>
            <person name="Thomas G.R."/>
            <person name="Vandekerckhove J."/>
        </authorList>
    </citation>
    <scope>PROTEIN SEQUENCE OF 2-11</scope>
    <source>
        <tissue>Platelet</tissue>
    </source>
</reference>
<reference key="7">
    <citation type="submission" date="2007-03" db="UniProtKB">
        <authorList>
            <person name="Lubec G."/>
            <person name="Afjehi-Sadat L."/>
        </authorList>
    </citation>
    <scope>PROTEIN SEQUENCE OF 76-91</scope>
    <scope>IDENTIFICATION BY MASS SPECTROMETRY</scope>
    <source>
        <tissue>Brain</tissue>
        <tissue>Cajal-Retzius cell</tissue>
    </source>
</reference>
<reference key="8">
    <citation type="journal article" date="2001" name="Biochem. J.">
        <title>Coactosin-like protein, a human F-actin-binding protein: critical role of lysine-75.</title>
        <authorList>
            <person name="Provost P."/>
            <person name="Doucet J."/>
            <person name="Stock A."/>
            <person name="Gerisch G."/>
            <person name="Samuelsson B."/>
            <person name="Radmark O."/>
        </authorList>
    </citation>
    <scope>FUNCTION</scope>
    <scope>SUBCELLULAR LOCATION</scope>
    <scope>TISSUE SPECIFICITY</scope>
    <scope>MUTAGENESIS OF LYS-75</scope>
</reference>
<reference key="9">
    <citation type="journal article" date="2001" name="J. Biol. Chem.">
        <title>5-lipoxygenase interacts with coactosin-like protein.</title>
        <authorList>
            <person name="Provost P."/>
            <person name="Doucet J."/>
            <person name="Hammarberg T."/>
            <person name="Gerisch G."/>
            <person name="Samuelsson B."/>
            <person name="Radmark O."/>
        </authorList>
    </citation>
    <scope>INTERACTION WITH 5-LIPOXYGENASE</scope>
    <scope>MUTAGENESIS OF LYS-130 AND LYS-131</scope>
</reference>
<reference key="10">
    <citation type="journal article" date="2009" name="Science">
        <title>Lysine acetylation targets protein complexes and co-regulates major cellular functions.</title>
        <authorList>
            <person name="Choudhary C."/>
            <person name="Kumar C."/>
            <person name="Gnad F."/>
            <person name="Nielsen M.L."/>
            <person name="Rehman M."/>
            <person name="Walther T.C."/>
            <person name="Olsen J.V."/>
            <person name="Mann M."/>
        </authorList>
    </citation>
    <scope>ACETYLATION [LARGE SCALE ANALYSIS] AT LYS-102 AND LYS-126</scope>
    <scope>IDENTIFICATION BY MASS SPECTROMETRY [LARGE SCALE ANALYSIS]</scope>
</reference>
<reference key="11">
    <citation type="journal article" date="2010" name="Biochem. J.">
        <title>Coactosin-like protein functions as a stabilizing chaperone for 5-lipoxygenase: role of tryptophan 102.</title>
        <authorList>
            <person name="Esser J."/>
            <person name="Rakonjac M."/>
            <person name="Hofmann B."/>
            <person name="Fischer L."/>
            <person name="Provost P."/>
            <person name="Schneider G."/>
            <person name="Steinhilber D."/>
            <person name="Samuelsson B."/>
            <person name="Radmark O."/>
        </authorList>
    </citation>
    <scope>FUNCTION</scope>
    <scope>SUBUNIT</scope>
    <scope>SUBCELLULAR LOCATION</scope>
</reference>
<reference key="12">
    <citation type="journal article" date="2011" name="BMC Syst. Biol.">
        <title>Initial characterization of the human central proteome.</title>
        <authorList>
            <person name="Burkard T.R."/>
            <person name="Planyavsky M."/>
            <person name="Kaupe I."/>
            <person name="Breitwieser F.P."/>
            <person name="Buerckstuemmer T."/>
            <person name="Bennett K.L."/>
            <person name="Superti-Furga G."/>
            <person name="Colinge J."/>
        </authorList>
    </citation>
    <scope>IDENTIFICATION BY MASS SPECTROMETRY [LARGE SCALE ANALYSIS]</scope>
</reference>
<reference key="13">
    <citation type="journal article" date="2012" name="Proc. Natl. Acad. Sci. U.S.A.">
        <title>N-terminal acetylome analyses and functional insights of the N-terminal acetyltransferase NatB.</title>
        <authorList>
            <person name="Van Damme P."/>
            <person name="Lasa M."/>
            <person name="Polevoda B."/>
            <person name="Gazquez C."/>
            <person name="Elosegui-Artola A."/>
            <person name="Kim D.S."/>
            <person name="De Juan-Pardo E."/>
            <person name="Demeyer K."/>
            <person name="Hole K."/>
            <person name="Larrea E."/>
            <person name="Timmerman E."/>
            <person name="Prieto J."/>
            <person name="Arnesen T."/>
            <person name="Sherman F."/>
            <person name="Gevaert K."/>
            <person name="Aldabe R."/>
        </authorList>
    </citation>
    <scope>ACETYLATION [LARGE SCALE ANALYSIS] AT ALA-2</scope>
    <scope>CLEAVAGE OF INITIATOR METHIONINE [LARGE SCALE ANALYSIS]</scope>
    <scope>IDENTIFICATION BY MASS SPECTROMETRY [LARGE SCALE ANALYSIS]</scope>
</reference>
<reference key="14">
    <citation type="journal article" date="2004" name="J. Biomol. NMR">
        <title>NMR structure of human coactosin-like protein.</title>
        <authorList>
            <person name="Liepinsh E."/>
            <person name="Rakonjac M."/>
            <person name="Boissonneault V."/>
            <person name="Provost P."/>
            <person name="Samuelsson B."/>
            <person name="Radmark O."/>
            <person name="Otting G."/>
        </authorList>
    </citation>
    <scope>STRUCTURE BY NMR</scope>
</reference>
<reference key="15">
    <citation type="journal article" date="2004" name="Protein Sci.">
        <title>Crystal structure of human coactosin-like protein at 1.9 A resolution.</title>
        <authorList>
            <person name="Li X."/>
            <person name="Liu X."/>
            <person name="Lou Z."/>
            <person name="Duan X."/>
            <person name="Wu H."/>
            <person name="Liu Y."/>
            <person name="Rao Z."/>
        </authorList>
    </citation>
    <scope>X-RAY CRYSTALLOGRAPHY (1.9 ANGSTROMS)</scope>
    <scope>SUBUNIT</scope>
</reference>
<reference key="16">
    <citation type="journal article" date="2006" name="Biochim. Biophys. Acta">
        <title>Binding model of human coactosin-like protein with filament actin revealed by mutagenesis.</title>
        <authorList>
            <person name="Dai H."/>
            <person name="Huang W."/>
            <person name="Xu J."/>
            <person name="Yao B."/>
            <person name="Xiong S."/>
            <person name="Ding H."/>
            <person name="Tang Y."/>
            <person name="Liu H."/>
            <person name="Wu J."/>
            <person name="Shi Y."/>
        </authorList>
    </citation>
    <scope>STRUCTURE BY NMR</scope>
    <scope>SUBUNIT</scope>
    <scope>F-ACTIN BINDING REGION</scope>
</reference>
<name>COTL1_HUMAN</name>
<gene>
    <name type="primary">COTL1</name>
    <name type="synonym">CLP</name>
</gene>
<dbReference type="EMBL" id="L54057">
    <property type="protein sequence ID" value="AAA88022.1"/>
    <property type="molecule type" value="mRNA"/>
</dbReference>
<dbReference type="EMBL" id="BT006968">
    <property type="protein sequence ID" value="AAP35614.1"/>
    <property type="molecule type" value="mRNA"/>
</dbReference>
<dbReference type="EMBL" id="AK315675">
    <property type="protein sequence ID" value="BAG38040.1"/>
    <property type="molecule type" value="mRNA"/>
</dbReference>
<dbReference type="EMBL" id="CH471114">
    <property type="protein sequence ID" value="EAW95476.1"/>
    <property type="molecule type" value="Genomic_DNA"/>
</dbReference>
<dbReference type="EMBL" id="CH471114">
    <property type="protein sequence ID" value="EAW95477.1"/>
    <property type="molecule type" value="Genomic_DNA"/>
</dbReference>
<dbReference type="EMBL" id="BC010039">
    <property type="protein sequence ID" value="AAH10039.1"/>
    <property type="molecule type" value="mRNA"/>
</dbReference>
<dbReference type="EMBL" id="BC010884">
    <property type="protein sequence ID" value="AAH10884.1"/>
    <property type="molecule type" value="mRNA"/>
</dbReference>
<dbReference type="EMBL" id="BC016702">
    <property type="protein sequence ID" value="AAH16702.1"/>
    <property type="molecule type" value="mRNA"/>
</dbReference>
<dbReference type="EMBL" id="BC042970">
    <property type="protein sequence ID" value="AAH42970.1"/>
    <property type="molecule type" value="mRNA"/>
</dbReference>
<dbReference type="EMBL" id="BC053682">
    <property type="protein sequence ID" value="AAH53682.1"/>
    <property type="molecule type" value="mRNA"/>
</dbReference>
<dbReference type="CCDS" id="CCDS10947.1"/>
<dbReference type="RefSeq" id="NP_066972.1">
    <property type="nucleotide sequence ID" value="NM_021149.5"/>
</dbReference>
<dbReference type="PDB" id="1T2L">
    <property type="method" value="X-ray"/>
    <property type="resolution" value="2.80 A"/>
    <property type="chains" value="A/B=2-142"/>
</dbReference>
<dbReference type="PDB" id="1T3X">
    <property type="method" value="X-ray"/>
    <property type="resolution" value="2.00 A"/>
    <property type="chains" value="A=2-142"/>
</dbReference>
<dbReference type="PDB" id="1T3Y">
    <property type="method" value="X-ray"/>
    <property type="resolution" value="1.15 A"/>
    <property type="chains" value="A=2-142"/>
</dbReference>
<dbReference type="PDB" id="1TMW">
    <property type="method" value="NMR"/>
    <property type="chains" value="A=2-142"/>
</dbReference>
<dbReference type="PDB" id="1VFQ">
    <property type="method" value="X-ray"/>
    <property type="resolution" value="1.90 A"/>
    <property type="chains" value="A=1-142"/>
</dbReference>
<dbReference type="PDB" id="1WNJ">
    <property type="method" value="NMR"/>
    <property type="chains" value="A=1-142"/>
</dbReference>
<dbReference type="PDBsum" id="1T2L"/>
<dbReference type="PDBsum" id="1T3X"/>
<dbReference type="PDBsum" id="1T3Y"/>
<dbReference type="PDBsum" id="1TMW"/>
<dbReference type="PDBsum" id="1VFQ"/>
<dbReference type="PDBsum" id="1WNJ"/>
<dbReference type="BMRB" id="Q14019"/>
<dbReference type="SMR" id="Q14019"/>
<dbReference type="BioGRID" id="116979">
    <property type="interactions" value="65"/>
</dbReference>
<dbReference type="DIP" id="DIP-30951N"/>
<dbReference type="FunCoup" id="Q14019">
    <property type="interactions" value="456"/>
</dbReference>
<dbReference type="IntAct" id="Q14019">
    <property type="interactions" value="12"/>
</dbReference>
<dbReference type="STRING" id="9606.ENSP00000262428"/>
<dbReference type="GlyGen" id="Q14019">
    <property type="glycosylation" value="1 site, 1 O-linked glycan (1 site)"/>
</dbReference>
<dbReference type="iPTMnet" id="Q14019"/>
<dbReference type="MetOSite" id="Q14019"/>
<dbReference type="PhosphoSitePlus" id="Q14019"/>
<dbReference type="SwissPalm" id="Q14019"/>
<dbReference type="BioMuta" id="COTL1"/>
<dbReference type="DMDM" id="21759076"/>
<dbReference type="OGP" id="Q14019"/>
<dbReference type="REPRODUCTION-2DPAGE" id="IPI00017704"/>
<dbReference type="jPOST" id="Q14019"/>
<dbReference type="MassIVE" id="Q14019"/>
<dbReference type="PaxDb" id="9606-ENSP00000262428"/>
<dbReference type="PeptideAtlas" id="Q14019"/>
<dbReference type="ProteomicsDB" id="59796"/>
<dbReference type="Pumba" id="Q14019"/>
<dbReference type="TopDownProteomics" id="Q14019"/>
<dbReference type="Antibodypedia" id="30596">
    <property type="antibodies" value="344 antibodies from 31 providers"/>
</dbReference>
<dbReference type="DNASU" id="23406"/>
<dbReference type="Ensembl" id="ENST00000262428.5">
    <property type="protein sequence ID" value="ENSP00000262428.4"/>
    <property type="gene ID" value="ENSG00000103187.8"/>
</dbReference>
<dbReference type="GeneID" id="23406"/>
<dbReference type="KEGG" id="hsa:23406"/>
<dbReference type="MANE-Select" id="ENST00000262428.5">
    <property type="protein sequence ID" value="ENSP00000262428.4"/>
    <property type="RefSeq nucleotide sequence ID" value="NM_021149.5"/>
    <property type="RefSeq protein sequence ID" value="NP_066972.1"/>
</dbReference>
<dbReference type="UCSC" id="uc002fid.5">
    <property type="organism name" value="human"/>
</dbReference>
<dbReference type="AGR" id="HGNC:18304"/>
<dbReference type="CTD" id="23406"/>
<dbReference type="DisGeNET" id="23406"/>
<dbReference type="GeneCards" id="COTL1"/>
<dbReference type="HGNC" id="HGNC:18304">
    <property type="gene designation" value="COTL1"/>
</dbReference>
<dbReference type="HPA" id="ENSG00000103187">
    <property type="expression patterns" value="Tissue enhanced (lymphoid)"/>
</dbReference>
<dbReference type="MIM" id="606748">
    <property type="type" value="gene"/>
</dbReference>
<dbReference type="neXtProt" id="NX_Q14019"/>
<dbReference type="OpenTargets" id="ENSG00000103187"/>
<dbReference type="PharmGKB" id="PA38522"/>
<dbReference type="VEuPathDB" id="HostDB:ENSG00000103187"/>
<dbReference type="eggNOG" id="KOG3655">
    <property type="taxonomic scope" value="Eukaryota"/>
</dbReference>
<dbReference type="GeneTree" id="ENSGT00390000012498"/>
<dbReference type="HOGENOM" id="CLU_129657_1_0_1"/>
<dbReference type="InParanoid" id="Q14019"/>
<dbReference type="OMA" id="WIGPNCK"/>
<dbReference type="OrthoDB" id="20822at2759"/>
<dbReference type="PAN-GO" id="Q14019">
    <property type="GO annotations" value="5 GO annotations based on evolutionary models"/>
</dbReference>
<dbReference type="PhylomeDB" id="Q14019"/>
<dbReference type="TreeFam" id="TF324318"/>
<dbReference type="PathwayCommons" id="Q14019"/>
<dbReference type="Reactome" id="R-HSA-6798695">
    <property type="pathway name" value="Neutrophil degranulation"/>
</dbReference>
<dbReference type="SignaLink" id="Q14019"/>
<dbReference type="BioGRID-ORCS" id="23406">
    <property type="hits" value="12 hits in 1155 CRISPR screens"/>
</dbReference>
<dbReference type="ChiTaRS" id="COTL1">
    <property type="organism name" value="human"/>
</dbReference>
<dbReference type="EvolutionaryTrace" id="Q14019"/>
<dbReference type="GeneWiki" id="COTL1"/>
<dbReference type="GenomeRNAi" id="23406"/>
<dbReference type="Pharos" id="Q14019">
    <property type="development level" value="Tbio"/>
</dbReference>
<dbReference type="PRO" id="PR:Q14019"/>
<dbReference type="Proteomes" id="UP000005640">
    <property type="component" value="Chromosome 16"/>
</dbReference>
<dbReference type="RNAct" id="Q14019">
    <property type="molecule type" value="protein"/>
</dbReference>
<dbReference type="Bgee" id="ENSG00000103187">
    <property type="expression patterns" value="Expressed in monocyte and 196 other cell types or tissues"/>
</dbReference>
<dbReference type="ExpressionAtlas" id="Q14019">
    <property type="expression patterns" value="baseline and differential"/>
</dbReference>
<dbReference type="GO" id="GO:0030864">
    <property type="term" value="C:cortical actin cytoskeleton"/>
    <property type="evidence" value="ECO:0000318"/>
    <property type="project" value="GO_Central"/>
</dbReference>
<dbReference type="GO" id="GO:0005829">
    <property type="term" value="C:cytosol"/>
    <property type="evidence" value="ECO:0000314"/>
    <property type="project" value="HPA"/>
</dbReference>
<dbReference type="GO" id="GO:0070062">
    <property type="term" value="C:extracellular exosome"/>
    <property type="evidence" value="ECO:0007005"/>
    <property type="project" value="UniProtKB"/>
</dbReference>
<dbReference type="GO" id="GO:0005576">
    <property type="term" value="C:extracellular region"/>
    <property type="evidence" value="ECO:0000304"/>
    <property type="project" value="Reactome"/>
</dbReference>
<dbReference type="GO" id="GO:1904813">
    <property type="term" value="C:ficolin-1-rich granule lumen"/>
    <property type="evidence" value="ECO:0000304"/>
    <property type="project" value="Reactome"/>
</dbReference>
<dbReference type="GO" id="GO:0005634">
    <property type="term" value="C:nucleus"/>
    <property type="evidence" value="ECO:0007669"/>
    <property type="project" value="UniProtKB-SubCell"/>
</dbReference>
<dbReference type="GO" id="GO:0034774">
    <property type="term" value="C:secretory granule lumen"/>
    <property type="evidence" value="ECO:0000304"/>
    <property type="project" value="Reactome"/>
</dbReference>
<dbReference type="GO" id="GO:0030427">
    <property type="term" value="C:site of polarized growth"/>
    <property type="evidence" value="ECO:0000318"/>
    <property type="project" value="GO_Central"/>
</dbReference>
<dbReference type="GO" id="GO:0003779">
    <property type="term" value="F:actin binding"/>
    <property type="evidence" value="ECO:0000314"/>
    <property type="project" value="UniProtKB"/>
</dbReference>
<dbReference type="GO" id="GO:0051015">
    <property type="term" value="F:actin filament binding"/>
    <property type="evidence" value="ECO:0000318"/>
    <property type="project" value="GO_Central"/>
</dbReference>
<dbReference type="GO" id="GO:0019899">
    <property type="term" value="F:enzyme binding"/>
    <property type="evidence" value="ECO:0000353"/>
    <property type="project" value="UniProtKB"/>
</dbReference>
<dbReference type="GO" id="GO:0050832">
    <property type="term" value="P:defense response to fungus"/>
    <property type="evidence" value="ECO:0007669"/>
    <property type="project" value="Ensembl"/>
</dbReference>
<dbReference type="GO" id="GO:0030833">
    <property type="term" value="P:regulation of actin filament polymerization"/>
    <property type="evidence" value="ECO:0000318"/>
    <property type="project" value="GO_Central"/>
</dbReference>
<dbReference type="CDD" id="cd11282">
    <property type="entry name" value="ADF_coactosin_like"/>
    <property type="match status" value="1"/>
</dbReference>
<dbReference type="DisProt" id="DP02824"/>
<dbReference type="FunFam" id="3.40.20.10:FF:000018">
    <property type="entry name" value="Coactosin-like 1"/>
    <property type="match status" value="1"/>
</dbReference>
<dbReference type="Gene3D" id="3.40.20.10">
    <property type="entry name" value="Severin"/>
    <property type="match status" value="1"/>
</dbReference>
<dbReference type="InterPro" id="IPR002108">
    <property type="entry name" value="ADF-H"/>
</dbReference>
<dbReference type="InterPro" id="IPR029006">
    <property type="entry name" value="ADF-H/Gelsolin-like_dom_sf"/>
</dbReference>
<dbReference type="PANTHER" id="PTHR10829:SF29">
    <property type="entry name" value="COACTOSIN-LIKE PROTEIN"/>
    <property type="match status" value="1"/>
</dbReference>
<dbReference type="PANTHER" id="PTHR10829">
    <property type="entry name" value="CORTACTIN AND DREBRIN"/>
    <property type="match status" value="1"/>
</dbReference>
<dbReference type="Pfam" id="PF00241">
    <property type="entry name" value="Cofilin_ADF"/>
    <property type="match status" value="1"/>
</dbReference>
<dbReference type="SMART" id="SM00102">
    <property type="entry name" value="ADF"/>
    <property type="match status" value="1"/>
</dbReference>
<dbReference type="SUPFAM" id="SSF55753">
    <property type="entry name" value="Actin depolymerizing proteins"/>
    <property type="match status" value="1"/>
</dbReference>
<dbReference type="PROSITE" id="PS51263">
    <property type="entry name" value="ADF_H"/>
    <property type="match status" value="1"/>
</dbReference>